<accession>A1D1Y5</accession>
<proteinExistence type="inferred from homology"/>
<feature type="chain" id="PRO_0000295372" description="PAN2-PAN3 deadenylation complex subunit PAN3">
    <location>
        <begin position="1"/>
        <end position="661"/>
    </location>
</feature>
<feature type="zinc finger region" description="C3H1-type" evidence="1">
    <location>
        <begin position="26"/>
        <end position="55"/>
    </location>
</feature>
<feature type="region of interest" description="Disordered" evidence="2">
    <location>
        <begin position="1"/>
        <end position="26"/>
    </location>
</feature>
<feature type="region of interest" description="Disordered" evidence="2">
    <location>
        <begin position="53"/>
        <end position="130"/>
    </location>
</feature>
<feature type="region of interest" description="Pseudokinase domain" evidence="1">
    <location>
        <begin position="263"/>
        <end position="524"/>
    </location>
</feature>
<feature type="region of interest" description="Knob domain" evidence="1">
    <location>
        <begin position="564"/>
        <end position="661"/>
    </location>
</feature>
<feature type="coiled-coil region" evidence="1">
    <location>
        <begin position="525"/>
        <end position="563"/>
    </location>
</feature>
<feature type="compositionally biased region" description="Low complexity" evidence="2">
    <location>
        <begin position="75"/>
        <end position="102"/>
    </location>
</feature>
<feature type="compositionally biased region" description="Polar residues" evidence="2">
    <location>
        <begin position="115"/>
        <end position="130"/>
    </location>
</feature>
<feature type="binding site" evidence="1">
    <location>
        <position position="315"/>
    </location>
    <ligand>
        <name>ATP</name>
        <dbReference type="ChEBI" id="CHEBI:30616"/>
    </ligand>
</feature>
<feature type="binding site" evidence="1">
    <location>
        <begin position="364"/>
        <end position="371"/>
    </location>
    <ligand>
        <name>ATP</name>
        <dbReference type="ChEBI" id="CHEBI:30616"/>
    </ligand>
</feature>
<feature type="binding site" evidence="1">
    <location>
        <begin position="424"/>
        <end position="425"/>
    </location>
    <ligand>
        <name>ATP</name>
        <dbReference type="ChEBI" id="CHEBI:30616"/>
    </ligand>
</feature>
<evidence type="ECO:0000255" key="1">
    <source>
        <dbReference type="HAMAP-Rule" id="MF_03181"/>
    </source>
</evidence>
<evidence type="ECO:0000256" key="2">
    <source>
        <dbReference type="SAM" id="MobiDB-lite"/>
    </source>
</evidence>
<evidence type="ECO:0000305" key="3"/>
<comment type="function">
    <text evidence="1">Regulatory subunit of the poly(A)-nuclease (PAN) deadenylation complex, one of two cytoplasmic mRNA deadenylases involved in mRNA turnover. PAN specifically shortens poly(A) tails of RNA and the activity is stimulated by poly(A)-binding protein pab1. PAN deadenylation is followed by rapid degradation of the shortened mRNA tails by the CCR4-NOT complex. Deadenylated mRNAs are then degraded by two alternative mechanisms, namely exosome-mediated 3'-5' exonucleolytic degradation, or deadenylation-dependent mRNA decaping and subsequent 5'-3' exonucleolytic degradation by xrn1. May also be involved in post-transcriptional maturation of mRNA poly(A) tails. pan3 acts as a positive regulator for PAN activity, recruiting the catalytic subunit pan2 to mRNA via its interaction with RNA and with pab1.</text>
</comment>
<comment type="subunit">
    <text evidence="1">Homodimer. Forms a heterotrimer with a catalytic subunit pan2 to form the poly(A)-nuclease (PAN) deadenylation complex. Interacts (via PAM-2 motif) with poly(A)-binding protein pab1 (via PABC domain), conferring substrate specificity of the enzyme complex.</text>
</comment>
<comment type="subcellular location">
    <subcellularLocation>
        <location evidence="1">Cytoplasm</location>
    </subcellularLocation>
</comment>
<comment type="domain">
    <text evidence="1">The N-terminal zinc finger binds to poly(A) RNA.</text>
</comment>
<comment type="domain">
    <text evidence="1">Contains a pseudokinase domain. The protein kinase domain is predicted to be catalytically inactive because some of the residues important for catalytic activity are substituted and it lacks the equivalent of the binding site for a peptide substrate. However, it has retained an ATP-binding site and ATP-binding is required for mRNA degradation, stimulating the activity of the pan2 nuclease in vitro. The nucleotide-binding site is juxtaposed to the RNase active site of pan2 in the complex and may actually bind nucleosides of a poly(A) RNA rather than ATP, feeding the poly(A)-tail to the active site of the deadenylase and thus increasing the efficiency with which this distributive enzyme degrades oligo(A) RNAs.</text>
</comment>
<comment type="domain">
    <text evidence="1">The pseudokinase domain, the coiled-coil (CC), and C-terminal knob domain (CK) form a structural unit (PKC) that forms an extensive high-affinity interaction surface for pan2.</text>
</comment>
<comment type="similarity">
    <text evidence="1">Belongs to the protein kinase superfamily. PAN3 family.</text>
</comment>
<comment type="sequence caution" evidence="3">
    <conflict type="erroneous gene model prediction">
        <sequence resource="EMBL-CDS" id="EAW22428"/>
    </conflict>
</comment>
<keyword id="KW-0067">ATP-binding</keyword>
<keyword id="KW-0175">Coiled coil</keyword>
<keyword id="KW-0963">Cytoplasm</keyword>
<keyword id="KW-0479">Metal-binding</keyword>
<keyword id="KW-0507">mRNA processing</keyword>
<keyword id="KW-0547">Nucleotide-binding</keyword>
<keyword id="KW-1185">Reference proteome</keyword>
<keyword id="KW-0862">Zinc</keyword>
<keyword id="KW-0863">Zinc-finger</keyword>
<reference key="1">
    <citation type="journal article" date="2008" name="PLoS Genet.">
        <title>Genomic islands in the pathogenic filamentous fungus Aspergillus fumigatus.</title>
        <authorList>
            <person name="Fedorova N.D."/>
            <person name="Khaldi N."/>
            <person name="Joardar V.S."/>
            <person name="Maiti R."/>
            <person name="Amedeo P."/>
            <person name="Anderson M.J."/>
            <person name="Crabtree J."/>
            <person name="Silva J.C."/>
            <person name="Badger J.H."/>
            <person name="Albarraq A."/>
            <person name="Angiuoli S."/>
            <person name="Bussey H."/>
            <person name="Bowyer P."/>
            <person name="Cotty P.J."/>
            <person name="Dyer P.S."/>
            <person name="Egan A."/>
            <person name="Galens K."/>
            <person name="Fraser-Liggett C.M."/>
            <person name="Haas B.J."/>
            <person name="Inman J.M."/>
            <person name="Kent R."/>
            <person name="Lemieux S."/>
            <person name="Malavazi I."/>
            <person name="Orvis J."/>
            <person name="Roemer T."/>
            <person name="Ronning C.M."/>
            <person name="Sundaram J.P."/>
            <person name="Sutton G."/>
            <person name="Turner G."/>
            <person name="Venter J.C."/>
            <person name="White O.R."/>
            <person name="Whitty B.R."/>
            <person name="Youngman P."/>
            <person name="Wolfe K.H."/>
            <person name="Goldman G.H."/>
            <person name="Wortman J.R."/>
            <person name="Jiang B."/>
            <person name="Denning D.W."/>
            <person name="Nierman W.C."/>
        </authorList>
    </citation>
    <scope>NUCLEOTIDE SEQUENCE [LARGE SCALE GENOMIC DNA]</scope>
    <source>
        <strain>ATCC 1020 / DSM 3700 / CBS 544.65 / FGSC A1164 / JCM 1740 / NRRL 181 / WB 181</strain>
    </source>
</reference>
<protein>
    <recommendedName>
        <fullName evidence="1">PAN2-PAN3 deadenylation complex subunit PAN3</fullName>
    </recommendedName>
    <alternativeName>
        <fullName evidence="1">PAB1P-dependent poly(A)-specific ribonuclease</fullName>
    </alternativeName>
    <alternativeName>
        <fullName evidence="1">Poly(A)-nuclease deadenylation complex subunit 3</fullName>
        <shortName evidence="1">PAN deadenylation complex subunit 3</shortName>
    </alternativeName>
</protein>
<sequence length="661" mass="73541">MASAGKPALDDSRRGTGSPKIKARENAKDTLCRNITIYGRCRYEDKGCAFNHDPHKVNSSYQSDSKKRFNVDSPSFTPSLLSSNGSSPTSTPATTKKMTTISPKAANAAPFQPRSVVSRSNASTPGLRQDTVTPDWTVAEVQEFVPQGFDNSHLATLQGNGNGPITSTSPFDPFVTTSTPLSAGGAVGPVQPNPYSHDTAAALGGAAFFPGAAGFQQPVQYHLYAPIGPHSQNTLGYQRNVHDLFLPNDFREELQKKAAATLQTLPNTQLPAQIDYFHSLVPLDLNHQKNATIFGFPSWVYKAQSSKDGNFYALRRLEGFRLTNEKAIRSVQAWKRVCNGSVVTVHDAFTSRSFQDSSLIFVTDYHPLSKTLAEQHLGAGQQRFQGRQNVHIPEQILWGYMTQIANALKAIHSNGLAARVIDASKILLTGKNRIRLNACAIMDVVQFDSQRTVTDLQRQDLVNFGQLIVTLGANSPTVMHNPTKAMEHFTRAYSPQLKNSVFWLLNGMQKDQDRNIDIFITGISSQLMSTFDSALHLDDQLTSDLSRELENGRLVRLMTKLNFVNERPEYEHDRQWSENGERYFLKIFRDYVFHQVDVQGDPVVDLGHVISCLNKLDAGTEEKITLISRDEQSCFIVSYKELKKALESSFQALMKPARRMH</sequence>
<gene>
    <name evidence="1" type="primary">pan3</name>
    <name type="ORF">NFIA_011100</name>
</gene>
<name>PAN3_NEOFI</name>
<dbReference type="EMBL" id="DS027688">
    <property type="protein sequence ID" value="EAW22428.1"/>
    <property type="status" value="ALT_SEQ"/>
    <property type="molecule type" value="Genomic_DNA"/>
</dbReference>
<dbReference type="RefSeq" id="XP_001264325.1">
    <property type="nucleotide sequence ID" value="XM_001264324.1"/>
</dbReference>
<dbReference type="SMR" id="A1D1Y5"/>
<dbReference type="STRING" id="331117.A1D1Y5"/>
<dbReference type="GeneID" id="4590907"/>
<dbReference type="KEGG" id="nfi:NFIA_011100"/>
<dbReference type="VEuPathDB" id="FungiDB:NFIA_011100"/>
<dbReference type="eggNOG" id="KOG3741">
    <property type="taxonomic scope" value="Eukaryota"/>
</dbReference>
<dbReference type="OrthoDB" id="204958at2759"/>
<dbReference type="Proteomes" id="UP000006702">
    <property type="component" value="Unassembled WGS sequence"/>
</dbReference>
<dbReference type="GO" id="GO:0000932">
    <property type="term" value="C:P-body"/>
    <property type="evidence" value="ECO:0007669"/>
    <property type="project" value="TreeGrafter"/>
</dbReference>
<dbReference type="GO" id="GO:0031251">
    <property type="term" value="C:PAN complex"/>
    <property type="evidence" value="ECO:0007669"/>
    <property type="project" value="UniProtKB-UniRule"/>
</dbReference>
<dbReference type="GO" id="GO:0005524">
    <property type="term" value="F:ATP binding"/>
    <property type="evidence" value="ECO:0007669"/>
    <property type="project" value="UniProtKB-UniRule"/>
</dbReference>
<dbReference type="GO" id="GO:0008143">
    <property type="term" value="F:poly(A) binding"/>
    <property type="evidence" value="ECO:0007669"/>
    <property type="project" value="TreeGrafter"/>
</dbReference>
<dbReference type="GO" id="GO:0004672">
    <property type="term" value="F:protein kinase activity"/>
    <property type="evidence" value="ECO:0007669"/>
    <property type="project" value="InterPro"/>
</dbReference>
<dbReference type="GO" id="GO:0008270">
    <property type="term" value="F:zinc ion binding"/>
    <property type="evidence" value="ECO:0007669"/>
    <property type="project" value="UniProtKB-KW"/>
</dbReference>
<dbReference type="GO" id="GO:0006397">
    <property type="term" value="P:mRNA processing"/>
    <property type="evidence" value="ECO:0007669"/>
    <property type="project" value="UniProtKB-KW"/>
</dbReference>
<dbReference type="GO" id="GO:0000289">
    <property type="term" value="P:nuclear-transcribed mRNA poly(A) tail shortening"/>
    <property type="evidence" value="ECO:0007669"/>
    <property type="project" value="UniProtKB-UniRule"/>
</dbReference>
<dbReference type="FunFam" id="1.10.287.3700:FF:000001">
    <property type="entry name" value="PAN2-PAN3 deadenylation complex subunit PAN3"/>
    <property type="match status" value="1"/>
</dbReference>
<dbReference type="FunFam" id="1.10.510.10:FF:000520">
    <property type="entry name" value="PAN2-PAN3 deadenylation complex subunit PAN3"/>
    <property type="match status" value="1"/>
</dbReference>
<dbReference type="FunFam" id="1.20.5.5160:FF:000002">
    <property type="entry name" value="PAN2-PAN3 deadenylation complex subunit PAN3"/>
    <property type="match status" value="1"/>
</dbReference>
<dbReference type="Gene3D" id="1.10.287.3700">
    <property type="match status" value="1"/>
</dbReference>
<dbReference type="Gene3D" id="1.20.5.5160">
    <property type="match status" value="1"/>
</dbReference>
<dbReference type="Gene3D" id="6.10.250.3160">
    <property type="match status" value="1"/>
</dbReference>
<dbReference type="Gene3D" id="1.10.510.10">
    <property type="entry name" value="Transferase(Phosphotransferase) domain 1"/>
    <property type="match status" value="1"/>
</dbReference>
<dbReference type="HAMAP" id="MF_03181">
    <property type="entry name" value="PAN3"/>
    <property type="match status" value="1"/>
</dbReference>
<dbReference type="InterPro" id="IPR011009">
    <property type="entry name" value="Kinase-like_dom_sf"/>
</dbReference>
<dbReference type="InterPro" id="IPR030844">
    <property type="entry name" value="PAN3"/>
</dbReference>
<dbReference type="InterPro" id="IPR041332">
    <property type="entry name" value="Pan3_PK"/>
</dbReference>
<dbReference type="InterPro" id="IPR000719">
    <property type="entry name" value="Prot_kinase_dom"/>
</dbReference>
<dbReference type="InterPro" id="IPR000571">
    <property type="entry name" value="Znf_CCCH"/>
</dbReference>
<dbReference type="PANTHER" id="PTHR12272">
    <property type="entry name" value="DEADENYLATION COMPLEX SUBUNIT PAN3"/>
    <property type="match status" value="1"/>
</dbReference>
<dbReference type="PANTHER" id="PTHR12272:SF11">
    <property type="entry name" value="PAN2-PAN3 DEADENYLATION COMPLEX SUBUNIT PAN3"/>
    <property type="match status" value="1"/>
</dbReference>
<dbReference type="Pfam" id="PF18101">
    <property type="entry name" value="Pan3_PK"/>
    <property type="match status" value="1"/>
</dbReference>
<dbReference type="SUPFAM" id="SSF56112">
    <property type="entry name" value="Protein kinase-like (PK-like)"/>
    <property type="match status" value="1"/>
</dbReference>
<dbReference type="PROSITE" id="PS50011">
    <property type="entry name" value="PROTEIN_KINASE_DOM"/>
    <property type="match status" value="1"/>
</dbReference>
<dbReference type="PROSITE" id="PS50103">
    <property type="entry name" value="ZF_C3H1"/>
    <property type="match status" value="1"/>
</dbReference>
<organism>
    <name type="scientific">Neosartorya fischeri (strain ATCC 1020 / DSM 3700 / CBS 544.65 / FGSC A1164 / JCM 1740 / NRRL 181 / WB 181)</name>
    <name type="common">Aspergillus fischerianus</name>
    <dbReference type="NCBI Taxonomy" id="331117"/>
    <lineage>
        <taxon>Eukaryota</taxon>
        <taxon>Fungi</taxon>
        <taxon>Dikarya</taxon>
        <taxon>Ascomycota</taxon>
        <taxon>Pezizomycotina</taxon>
        <taxon>Eurotiomycetes</taxon>
        <taxon>Eurotiomycetidae</taxon>
        <taxon>Eurotiales</taxon>
        <taxon>Aspergillaceae</taxon>
        <taxon>Aspergillus</taxon>
        <taxon>Aspergillus subgen. Fumigati</taxon>
    </lineage>
</organism>